<feature type="chain" id="PRO_0000214877" description="Uncharacterized protein Cj0987c">
    <location>
        <begin position="1"/>
        <end position="321"/>
    </location>
</feature>
<feature type="transmembrane region" description="Helical" evidence="1">
    <location>
        <begin position="12"/>
        <end position="32"/>
    </location>
</feature>
<feature type="transmembrane region" description="Helical" evidence="1">
    <location>
        <begin position="52"/>
        <end position="72"/>
    </location>
</feature>
<feature type="transmembrane region" description="Helical" evidence="1">
    <location>
        <begin position="86"/>
        <end position="106"/>
    </location>
</feature>
<feature type="transmembrane region" description="Helical" evidence="1">
    <location>
        <begin position="109"/>
        <end position="129"/>
    </location>
</feature>
<feature type="transmembrane region" description="Helical" evidence="1">
    <location>
        <begin position="136"/>
        <end position="156"/>
    </location>
</feature>
<feature type="transmembrane region" description="Helical" evidence="1">
    <location>
        <begin position="168"/>
        <end position="188"/>
    </location>
</feature>
<feature type="transmembrane region" description="Helical" evidence="1">
    <location>
        <begin position="214"/>
        <end position="234"/>
    </location>
</feature>
<feature type="transmembrane region" description="Helical" evidence="1">
    <location>
        <begin position="254"/>
        <end position="274"/>
    </location>
</feature>
<feature type="transmembrane region" description="Helical" evidence="1">
    <location>
        <begin position="292"/>
        <end position="312"/>
    </location>
</feature>
<feature type="sequence conflict" description="In Ref. 1; CAA85395." evidence="2" ref="1">
    <original>A</original>
    <variation>T</variation>
    <location>
        <position position="50"/>
    </location>
</feature>
<feature type="sequence conflict" description="In Ref. 1; CAA85395." evidence="2" ref="1">
    <original>S</original>
    <variation>T</variation>
    <location>
        <position position="55"/>
    </location>
</feature>
<accession>P45490</accession>
<accession>Q0P9R5</accession>
<accession>Q9PNV2</accession>
<gene>
    <name type="ordered locus">Cj0987c</name>
</gene>
<comment type="subcellular location">
    <subcellularLocation>
        <location evidence="2">Cell membrane</location>
        <topology evidence="2">Multi-pass membrane protein</topology>
    </subcellularLocation>
</comment>
<comment type="sequence caution" evidence="2">
    <conflict type="frameshift">
        <sequence resource="EMBL-CDS" id="CAA85395"/>
    </conflict>
</comment>
<proteinExistence type="predicted"/>
<sequence>MEKSLLFHFRRIGVEFIIFSVYAVFSISWAATGSLMPLISNDLALNTQQATLITSMIVVAKIFGASFTAFLVYKFGLKKGYFLGCILMSSGIFLSFVDSYSGILIIRFLTGLGSACALVCLVPIAQQWFEKKALHFVISFNITSNLVGITLGLVLAESISNYFGNWRDSLSFYAWINLILLILWLFVGKDENKKEEKKNNAKDLIYALKSRVTWGMIIFYIGPILFLNSLFTFLPTFYAQYAGFSKELADFAKKEIPALANFAIIFGPYLGLFFKRKNISFKIMLLSGGACIFICGFCMLFLQNLVLIQIFAVLSGIFYSM</sequence>
<evidence type="ECO:0000255" key="1"/>
<evidence type="ECO:0000305" key="2"/>
<organism>
    <name type="scientific">Campylobacter jejuni subsp. jejuni serotype O:2 (strain ATCC 700819 / NCTC 11168)</name>
    <dbReference type="NCBI Taxonomy" id="192222"/>
    <lineage>
        <taxon>Bacteria</taxon>
        <taxon>Pseudomonadati</taxon>
        <taxon>Campylobacterota</taxon>
        <taxon>Epsilonproteobacteria</taxon>
        <taxon>Campylobacterales</taxon>
        <taxon>Campylobacteraceae</taxon>
        <taxon>Campylobacter</taxon>
    </lineage>
</organism>
<protein>
    <recommendedName>
        <fullName>Uncharacterized protein Cj0987c</fullName>
    </recommendedName>
</protein>
<reference key="1">
    <citation type="journal article" date="1995" name="J. Bacteriol.">
        <title>Expression and characterization of Campylobacter jejuni benzoylglycine amidohydrolase (Hippuricase) gene in Escherichia coli.</title>
        <authorList>
            <person name="Hani E.K."/>
            <person name="Chan V.L."/>
        </authorList>
    </citation>
    <scope>NUCLEOTIDE SEQUENCE [GENOMIC DNA]</scope>
    <source>
        <strain>ATCC 43431 / TGH 9011 / Serotype O:3</strain>
    </source>
</reference>
<reference key="2">
    <citation type="journal article" date="2000" name="Nature">
        <title>The genome sequence of the food-borne pathogen Campylobacter jejuni reveals hypervariable sequences.</title>
        <authorList>
            <person name="Parkhill J."/>
            <person name="Wren B.W."/>
            <person name="Mungall K.L."/>
            <person name="Ketley J.M."/>
            <person name="Churcher C.M."/>
            <person name="Basham D."/>
            <person name="Chillingworth T."/>
            <person name="Davies R.M."/>
            <person name="Feltwell T."/>
            <person name="Holroyd S."/>
            <person name="Jagels K."/>
            <person name="Karlyshev A.V."/>
            <person name="Moule S."/>
            <person name="Pallen M.J."/>
            <person name="Penn C.W."/>
            <person name="Quail M.A."/>
            <person name="Rajandream M.A."/>
            <person name="Rutherford K.M."/>
            <person name="van Vliet A.H.M."/>
            <person name="Whitehead S."/>
            <person name="Barrell B.G."/>
        </authorList>
    </citation>
    <scope>NUCLEOTIDE SEQUENCE [LARGE SCALE GENOMIC DNA]</scope>
    <source>
        <strain>ATCC 700819 / NCTC 11168</strain>
    </source>
</reference>
<keyword id="KW-1003">Cell membrane</keyword>
<keyword id="KW-0472">Membrane</keyword>
<keyword id="KW-1185">Reference proteome</keyword>
<keyword id="KW-0812">Transmembrane</keyword>
<keyword id="KW-1133">Transmembrane helix</keyword>
<dbReference type="EMBL" id="Z36940">
    <property type="protein sequence ID" value="CAA85395.1"/>
    <property type="status" value="ALT_FRAME"/>
    <property type="molecule type" value="Genomic_DNA"/>
</dbReference>
<dbReference type="EMBL" id="AL111168">
    <property type="protein sequence ID" value="CAL35105.1"/>
    <property type="molecule type" value="Genomic_DNA"/>
</dbReference>
<dbReference type="PIR" id="H81373">
    <property type="entry name" value="H81373"/>
</dbReference>
<dbReference type="PIR" id="I40761">
    <property type="entry name" value="I40761"/>
</dbReference>
<dbReference type="RefSeq" id="WP_002853375.1">
    <property type="nucleotide sequence ID" value="NZ_SZUC01000001.1"/>
</dbReference>
<dbReference type="SMR" id="P45490"/>
<dbReference type="IntAct" id="P45490">
    <property type="interactions" value="4"/>
</dbReference>
<dbReference type="STRING" id="192222.Cj0987c"/>
<dbReference type="PaxDb" id="192222-Cj0987c"/>
<dbReference type="EnsemblBacteria" id="CAL35105">
    <property type="protein sequence ID" value="CAL35105"/>
    <property type="gene ID" value="Cj0987c"/>
</dbReference>
<dbReference type="eggNOG" id="COG2807">
    <property type="taxonomic scope" value="Bacteria"/>
</dbReference>
<dbReference type="HOGENOM" id="CLU_056507_1_1_7"/>
<dbReference type="Proteomes" id="UP000000799">
    <property type="component" value="Chromosome"/>
</dbReference>
<dbReference type="GO" id="GO:0005886">
    <property type="term" value="C:plasma membrane"/>
    <property type="evidence" value="ECO:0007669"/>
    <property type="project" value="UniProtKB-SubCell"/>
</dbReference>
<dbReference type="GO" id="GO:0022857">
    <property type="term" value="F:transmembrane transporter activity"/>
    <property type="evidence" value="ECO:0007669"/>
    <property type="project" value="InterPro"/>
</dbReference>
<dbReference type="CDD" id="cd06174">
    <property type="entry name" value="MFS"/>
    <property type="match status" value="1"/>
</dbReference>
<dbReference type="Gene3D" id="1.20.1250.20">
    <property type="entry name" value="MFS general substrate transporter like domains"/>
    <property type="match status" value="1"/>
</dbReference>
<dbReference type="InterPro" id="IPR011701">
    <property type="entry name" value="MFS"/>
</dbReference>
<dbReference type="InterPro" id="IPR020846">
    <property type="entry name" value="MFS_dom"/>
</dbReference>
<dbReference type="InterPro" id="IPR050189">
    <property type="entry name" value="MFS_Efflux_Transporters"/>
</dbReference>
<dbReference type="InterPro" id="IPR036259">
    <property type="entry name" value="MFS_trans_sf"/>
</dbReference>
<dbReference type="PANTHER" id="PTHR43124:SF3">
    <property type="entry name" value="CHLORAMPHENICOL EFFLUX PUMP RV0191"/>
    <property type="match status" value="1"/>
</dbReference>
<dbReference type="PANTHER" id="PTHR43124">
    <property type="entry name" value="PURINE EFFLUX PUMP PBUE"/>
    <property type="match status" value="1"/>
</dbReference>
<dbReference type="Pfam" id="PF07690">
    <property type="entry name" value="MFS_1"/>
    <property type="match status" value="1"/>
</dbReference>
<dbReference type="SUPFAM" id="SSF103473">
    <property type="entry name" value="MFS general substrate transporter"/>
    <property type="match status" value="1"/>
</dbReference>
<dbReference type="PROSITE" id="PS50850">
    <property type="entry name" value="MFS"/>
    <property type="match status" value="1"/>
</dbReference>
<name>Y987_CAMJE</name>